<protein>
    <recommendedName>
        <fullName evidence="1">Small ribosomal subunit protein bS21</fullName>
    </recommendedName>
    <alternativeName>
        <fullName evidence="3">30S ribosomal protein S21</fullName>
    </alternativeName>
</protein>
<sequence length="71" mass="8462">MPVIKVRENESFDVALRRFKRSCEKAGLLAEVRAREFYEKPTTIRKREKASLAKRHAKRNARENARNTRLY</sequence>
<feature type="chain" id="PRO_1000005090" description="Small ribosomal subunit protein bS21">
    <location>
        <begin position="1"/>
        <end position="71"/>
    </location>
</feature>
<feature type="region of interest" description="Disordered" evidence="2">
    <location>
        <begin position="48"/>
        <end position="71"/>
    </location>
</feature>
<feature type="compositionally biased region" description="Basic residues" evidence="2">
    <location>
        <begin position="48"/>
        <end position="59"/>
    </location>
</feature>
<feature type="compositionally biased region" description="Basic and acidic residues" evidence="2">
    <location>
        <begin position="60"/>
        <end position="71"/>
    </location>
</feature>
<reference key="1">
    <citation type="journal article" date="2008" name="J. Bacteriol.">
        <title>The complete genome sequence of Actinobacillus pleuropneumoniae L20 (serotype 5b).</title>
        <authorList>
            <person name="Foote S.J."/>
            <person name="Bosse J.T."/>
            <person name="Bouevitch A.B."/>
            <person name="Langford P.R."/>
            <person name="Young N.M."/>
            <person name="Nash J.H.E."/>
        </authorList>
    </citation>
    <scope>NUCLEOTIDE SEQUENCE [LARGE SCALE GENOMIC DNA]</scope>
    <source>
        <strain>L20</strain>
    </source>
</reference>
<keyword id="KW-1185">Reference proteome</keyword>
<keyword id="KW-0687">Ribonucleoprotein</keyword>
<keyword id="KW-0689">Ribosomal protein</keyword>
<gene>
    <name evidence="1" type="primary">rpsU</name>
    <name type="ordered locus">APL_1473</name>
</gene>
<proteinExistence type="inferred from homology"/>
<dbReference type="EMBL" id="CP000569">
    <property type="protein sequence ID" value="ABN74557.1"/>
    <property type="molecule type" value="Genomic_DNA"/>
</dbReference>
<dbReference type="RefSeq" id="WP_005598703.1">
    <property type="nucleotide sequence ID" value="NC_009053.1"/>
</dbReference>
<dbReference type="SMR" id="A3N2C1"/>
<dbReference type="STRING" id="416269.APL_1473"/>
<dbReference type="EnsemblBacteria" id="ABN74557">
    <property type="protein sequence ID" value="ABN74557"/>
    <property type="gene ID" value="APL_1473"/>
</dbReference>
<dbReference type="GeneID" id="92744016"/>
<dbReference type="KEGG" id="apl:APL_1473"/>
<dbReference type="eggNOG" id="COG0828">
    <property type="taxonomic scope" value="Bacteria"/>
</dbReference>
<dbReference type="HOGENOM" id="CLU_159258_1_0_6"/>
<dbReference type="Proteomes" id="UP000001432">
    <property type="component" value="Chromosome"/>
</dbReference>
<dbReference type="GO" id="GO:1990904">
    <property type="term" value="C:ribonucleoprotein complex"/>
    <property type="evidence" value="ECO:0007669"/>
    <property type="project" value="UniProtKB-KW"/>
</dbReference>
<dbReference type="GO" id="GO:0005840">
    <property type="term" value="C:ribosome"/>
    <property type="evidence" value="ECO:0007669"/>
    <property type="project" value="UniProtKB-KW"/>
</dbReference>
<dbReference type="GO" id="GO:0003735">
    <property type="term" value="F:structural constituent of ribosome"/>
    <property type="evidence" value="ECO:0007669"/>
    <property type="project" value="InterPro"/>
</dbReference>
<dbReference type="GO" id="GO:0006412">
    <property type="term" value="P:translation"/>
    <property type="evidence" value="ECO:0007669"/>
    <property type="project" value="UniProtKB-UniRule"/>
</dbReference>
<dbReference type="Gene3D" id="1.20.5.1150">
    <property type="entry name" value="Ribosomal protein S8"/>
    <property type="match status" value="1"/>
</dbReference>
<dbReference type="HAMAP" id="MF_00358">
    <property type="entry name" value="Ribosomal_bS21"/>
    <property type="match status" value="1"/>
</dbReference>
<dbReference type="InterPro" id="IPR001911">
    <property type="entry name" value="Ribosomal_bS21"/>
</dbReference>
<dbReference type="InterPro" id="IPR018278">
    <property type="entry name" value="Ribosomal_bS21_CS"/>
</dbReference>
<dbReference type="InterPro" id="IPR038380">
    <property type="entry name" value="Ribosomal_bS21_sf"/>
</dbReference>
<dbReference type="NCBIfam" id="TIGR00030">
    <property type="entry name" value="S21p"/>
    <property type="match status" value="1"/>
</dbReference>
<dbReference type="PANTHER" id="PTHR21109">
    <property type="entry name" value="MITOCHONDRIAL 28S RIBOSOMAL PROTEIN S21"/>
    <property type="match status" value="1"/>
</dbReference>
<dbReference type="PANTHER" id="PTHR21109:SF22">
    <property type="entry name" value="SMALL RIBOSOMAL SUBUNIT PROTEIN BS21"/>
    <property type="match status" value="1"/>
</dbReference>
<dbReference type="Pfam" id="PF01165">
    <property type="entry name" value="Ribosomal_S21"/>
    <property type="match status" value="1"/>
</dbReference>
<dbReference type="PRINTS" id="PR00976">
    <property type="entry name" value="RIBOSOMALS21"/>
</dbReference>
<dbReference type="PROSITE" id="PS01181">
    <property type="entry name" value="RIBOSOMAL_S21"/>
    <property type="match status" value="1"/>
</dbReference>
<evidence type="ECO:0000255" key="1">
    <source>
        <dbReference type="HAMAP-Rule" id="MF_00358"/>
    </source>
</evidence>
<evidence type="ECO:0000256" key="2">
    <source>
        <dbReference type="SAM" id="MobiDB-lite"/>
    </source>
</evidence>
<evidence type="ECO:0000305" key="3"/>
<name>RS21_ACTP2</name>
<comment type="similarity">
    <text evidence="1">Belongs to the bacterial ribosomal protein bS21 family.</text>
</comment>
<accession>A3N2C1</accession>
<organism>
    <name type="scientific">Actinobacillus pleuropneumoniae serotype 5b (strain L20)</name>
    <dbReference type="NCBI Taxonomy" id="416269"/>
    <lineage>
        <taxon>Bacteria</taxon>
        <taxon>Pseudomonadati</taxon>
        <taxon>Pseudomonadota</taxon>
        <taxon>Gammaproteobacteria</taxon>
        <taxon>Pasteurellales</taxon>
        <taxon>Pasteurellaceae</taxon>
        <taxon>Actinobacillus</taxon>
    </lineage>
</organism>